<name>Y376_UREPA</name>
<dbReference type="EMBL" id="AF222894">
    <property type="protein sequence ID" value="AAF30785.1"/>
    <property type="molecule type" value="Genomic_DNA"/>
</dbReference>
<dbReference type="RefSeq" id="WP_010891751.1">
    <property type="nucleotide sequence ID" value="NC_002162.1"/>
</dbReference>
<dbReference type="EnsemblBacteria" id="AAF30785">
    <property type="protein sequence ID" value="AAF30785"/>
    <property type="gene ID" value="UU376"/>
</dbReference>
<dbReference type="KEGG" id="uur:UU376"/>
<dbReference type="HOGENOM" id="CLU_069143_0_0_14"/>
<dbReference type="OrthoDB" id="405730at2"/>
<dbReference type="Proteomes" id="UP000000423">
    <property type="component" value="Chromosome"/>
</dbReference>
<reference key="1">
    <citation type="journal article" date="2000" name="Nature">
        <title>The complete sequence of the mucosal pathogen Ureaplasma urealyticum.</title>
        <authorList>
            <person name="Glass J.I."/>
            <person name="Lefkowitz E.J."/>
            <person name="Glass J.S."/>
            <person name="Heiner C.R."/>
            <person name="Chen E.Y."/>
            <person name="Cassell G.H."/>
        </authorList>
    </citation>
    <scope>NUCLEOTIDE SEQUENCE [LARGE SCALE GENOMIC DNA]</scope>
    <source>
        <strain>ATCC 700970</strain>
    </source>
</reference>
<evidence type="ECO:0000256" key="1">
    <source>
        <dbReference type="SAM" id="MobiDB-lite"/>
    </source>
</evidence>
<evidence type="ECO:0000305" key="2"/>
<proteinExistence type="predicted"/>
<feature type="chain" id="PRO_0000220831" description="Uncharacterized protein UU376">
    <location>
        <begin position="1"/>
        <end position="242"/>
    </location>
</feature>
<feature type="region of interest" description="Disordered" evidence="1">
    <location>
        <begin position="1"/>
        <end position="45"/>
    </location>
</feature>
<feature type="compositionally biased region" description="Low complexity" evidence="1">
    <location>
        <begin position="1"/>
        <end position="11"/>
    </location>
</feature>
<accession>Q9PQB5</accession>
<gene>
    <name type="ordered locus">UU376</name>
</gene>
<keyword id="KW-1185">Reference proteome</keyword>
<organism>
    <name type="scientific">Ureaplasma parvum serovar 3 (strain ATCC 700970)</name>
    <dbReference type="NCBI Taxonomy" id="273119"/>
    <lineage>
        <taxon>Bacteria</taxon>
        <taxon>Bacillati</taxon>
        <taxon>Mycoplasmatota</taxon>
        <taxon>Mycoplasmoidales</taxon>
        <taxon>Mycoplasmoidaceae</taxon>
        <taxon>Ureaplasma</taxon>
    </lineage>
</organism>
<protein>
    <recommendedName>
        <fullName>Uncharacterized protein UU376</fullName>
    </recommendedName>
</protein>
<sequence length="242" mass="26940">MNFEAASAPSQQPSPTPAPKTEEPKENGGSEQQADQPENSKKDDVVASGVKISEVKNNTATIEVTFSKFELADANKKDFVLEVIKKADTNPIQASDLKYDEASKTLSGKLSGLNSNVDYEISKLTLNGKEVKFNEEELLKSYVKNAKLFMTFNKENKKINVKLQNFDILNSLEENQPILTFDIEIKKDSSLQVVHKSLTKNQLSNLNGLEIDLKDKMNGNNANYDVKLTNAKLLNVNIETQK</sequence>
<comment type="similarity">
    <text evidence="2">To U.parvum UU171.</text>
</comment>